<keyword id="KW-0963">Cytoplasm</keyword>
<keyword id="KW-0444">Lipid biosynthesis</keyword>
<keyword id="KW-0443">Lipid metabolism</keyword>
<keyword id="KW-0479">Metal-binding</keyword>
<keyword id="KW-0520">NAD</keyword>
<keyword id="KW-0521">NADP</keyword>
<keyword id="KW-0560">Oxidoreductase</keyword>
<keyword id="KW-0594">Phospholipid biosynthesis</keyword>
<keyword id="KW-1208">Phospholipid metabolism</keyword>
<keyword id="KW-1185">Reference proteome</keyword>
<keyword id="KW-0862">Zinc</keyword>
<accession>Q8U147</accession>
<organism>
    <name type="scientific">Pyrococcus furiosus (strain ATCC 43587 / DSM 3638 / JCM 8422 / Vc1)</name>
    <dbReference type="NCBI Taxonomy" id="186497"/>
    <lineage>
        <taxon>Archaea</taxon>
        <taxon>Methanobacteriati</taxon>
        <taxon>Methanobacteriota</taxon>
        <taxon>Thermococci</taxon>
        <taxon>Thermococcales</taxon>
        <taxon>Thermococcaceae</taxon>
        <taxon>Pyrococcus</taxon>
    </lineage>
</organism>
<dbReference type="EC" id="1.1.1.261" evidence="1"/>
<dbReference type="EMBL" id="AE009950">
    <property type="protein sequence ID" value="AAL81506.1"/>
    <property type="status" value="ALT_INIT"/>
    <property type="molecule type" value="Genomic_DNA"/>
</dbReference>
<dbReference type="RefSeq" id="WP_014835398.1">
    <property type="nucleotide sequence ID" value="NZ_CP023154.1"/>
</dbReference>
<dbReference type="SMR" id="Q8U147"/>
<dbReference type="STRING" id="186497.PF1382"/>
<dbReference type="PaxDb" id="186497-PF1382"/>
<dbReference type="KEGG" id="pfu:PF1382"/>
<dbReference type="PATRIC" id="fig|186497.12.peg.1445"/>
<dbReference type="eggNOG" id="arCOG00982">
    <property type="taxonomic scope" value="Archaea"/>
</dbReference>
<dbReference type="HOGENOM" id="CLU_038362_0_0_2"/>
<dbReference type="OrthoDB" id="8656at2157"/>
<dbReference type="PhylomeDB" id="Q8U147"/>
<dbReference type="UniPathway" id="UPA00940"/>
<dbReference type="Proteomes" id="UP000001013">
    <property type="component" value="Chromosome"/>
</dbReference>
<dbReference type="GO" id="GO:0005737">
    <property type="term" value="C:cytoplasm"/>
    <property type="evidence" value="ECO:0007669"/>
    <property type="project" value="UniProtKB-SubCell"/>
</dbReference>
<dbReference type="GO" id="GO:0106357">
    <property type="term" value="F:glycerol-1-phosphate dehydrogenase (NAD+) activity"/>
    <property type="evidence" value="ECO:0007669"/>
    <property type="project" value="RHEA"/>
</dbReference>
<dbReference type="GO" id="GO:0106358">
    <property type="term" value="F:glycerol-1-phosphate dehydrogenase (NADP+) activity"/>
    <property type="evidence" value="ECO:0007669"/>
    <property type="project" value="RHEA"/>
</dbReference>
<dbReference type="GO" id="GO:0046872">
    <property type="term" value="F:metal ion binding"/>
    <property type="evidence" value="ECO:0007669"/>
    <property type="project" value="UniProtKB-KW"/>
</dbReference>
<dbReference type="GO" id="GO:0006650">
    <property type="term" value="P:glycerophospholipid metabolic process"/>
    <property type="evidence" value="ECO:0007669"/>
    <property type="project" value="UniProtKB-UniRule"/>
</dbReference>
<dbReference type="GO" id="GO:0008654">
    <property type="term" value="P:phospholipid biosynthetic process"/>
    <property type="evidence" value="ECO:0007669"/>
    <property type="project" value="UniProtKB-KW"/>
</dbReference>
<dbReference type="CDD" id="cd08173">
    <property type="entry name" value="Gro1PDH"/>
    <property type="match status" value="1"/>
</dbReference>
<dbReference type="Gene3D" id="3.40.50.1970">
    <property type="match status" value="1"/>
</dbReference>
<dbReference type="Gene3D" id="1.20.1090.10">
    <property type="entry name" value="Dehydroquinate synthase-like - alpha domain"/>
    <property type="match status" value="1"/>
</dbReference>
<dbReference type="HAMAP" id="MF_00497_A">
    <property type="entry name" value="G1P_dehydrogenase_A"/>
    <property type="match status" value="1"/>
</dbReference>
<dbReference type="InterPro" id="IPR023002">
    <property type="entry name" value="G1P_dehydrogenase_arc"/>
</dbReference>
<dbReference type="InterPro" id="IPR032837">
    <property type="entry name" value="G1PDH"/>
</dbReference>
<dbReference type="InterPro" id="IPR016205">
    <property type="entry name" value="Glycerol_DH"/>
</dbReference>
<dbReference type="NCBIfam" id="NF002022">
    <property type="entry name" value="PRK00843.1"/>
    <property type="match status" value="1"/>
</dbReference>
<dbReference type="PANTHER" id="PTHR43616">
    <property type="entry name" value="GLYCEROL DEHYDROGENASE"/>
    <property type="match status" value="1"/>
</dbReference>
<dbReference type="PANTHER" id="PTHR43616:SF5">
    <property type="entry name" value="GLYCEROL DEHYDROGENASE 1"/>
    <property type="match status" value="1"/>
</dbReference>
<dbReference type="Pfam" id="PF13685">
    <property type="entry name" value="Fe-ADH_2"/>
    <property type="match status" value="1"/>
</dbReference>
<dbReference type="PIRSF" id="PIRSF000112">
    <property type="entry name" value="Glycerol_dehydrogenase"/>
    <property type="match status" value="1"/>
</dbReference>
<dbReference type="SUPFAM" id="SSF56796">
    <property type="entry name" value="Dehydroquinate synthase-like"/>
    <property type="match status" value="1"/>
</dbReference>
<proteinExistence type="inferred from homology"/>
<sequence>MHIMEFPREVILGKNVISETVNVAKRLSFSSPVLVVYGPKTKEIAGKDVERVLKEEFDVHSVIVKEATINEVEKVEGIIRDNKVKWAIAVGGGTIIDVTKLASYRAGIPFVSFPTTASHDGIASANASIKGLGTKTSIKARPPVAVIADIRIIKSAPRRYLAAGVGDVISNITAVRDWKLAHKIKGEYFSEYAAALSLMSAKMVMRDAEIIRIGDDEGVRKVVKALISSGVAMSIAGSSRPASGAEHLFSHALDLLLEKPALHGEQTGIGTIIMAYLHGINWRKIKETLQKVGAPTTAYELGVDPEIIIEALTIAHTIRPERYTILGRDGLTREAAERAAKITGVI</sequence>
<feature type="chain" id="PRO_0000157349" description="Glycerol-1-phosphate dehydrogenase [NAD(P)+]">
    <location>
        <begin position="1"/>
        <end position="346"/>
    </location>
</feature>
<feature type="binding site" evidence="1">
    <location>
        <begin position="93"/>
        <end position="97"/>
    </location>
    <ligand>
        <name>NAD(+)</name>
        <dbReference type="ChEBI" id="CHEBI:57540"/>
    </ligand>
</feature>
<feature type="binding site" evidence="1">
    <location>
        <begin position="115"/>
        <end position="118"/>
    </location>
    <ligand>
        <name>NAD(+)</name>
        <dbReference type="ChEBI" id="CHEBI:57540"/>
    </ligand>
</feature>
<feature type="binding site" evidence="1">
    <location>
        <position position="120"/>
    </location>
    <ligand>
        <name>substrate</name>
    </ligand>
</feature>
<feature type="binding site" evidence="1">
    <location>
        <position position="124"/>
    </location>
    <ligand>
        <name>NAD(+)</name>
        <dbReference type="ChEBI" id="CHEBI:57540"/>
    </ligand>
</feature>
<feature type="binding site" evidence="1">
    <location>
        <position position="167"/>
    </location>
    <ligand>
        <name>substrate</name>
    </ligand>
</feature>
<feature type="binding site" evidence="1">
    <location>
        <position position="167"/>
    </location>
    <ligand>
        <name>Zn(2+)</name>
        <dbReference type="ChEBI" id="CHEBI:29105"/>
        <note>catalytic</note>
    </ligand>
</feature>
<feature type="binding site" evidence="1">
    <location>
        <position position="247"/>
    </location>
    <ligand>
        <name>Zn(2+)</name>
        <dbReference type="ChEBI" id="CHEBI:29105"/>
        <note>catalytic</note>
    </ligand>
</feature>
<feature type="binding site" evidence="1">
    <location>
        <position position="251"/>
    </location>
    <ligand>
        <name>substrate</name>
    </ligand>
</feature>
<feature type="binding site" evidence="1">
    <location>
        <position position="263"/>
    </location>
    <ligand>
        <name>Zn(2+)</name>
        <dbReference type="ChEBI" id="CHEBI:29105"/>
        <note>catalytic</note>
    </ligand>
</feature>
<protein>
    <recommendedName>
        <fullName evidence="1">Glycerol-1-phosphate dehydrogenase [NAD(P)+]</fullName>
        <shortName evidence="1">G1P dehydrogenase</shortName>
        <shortName evidence="1">G1PDH</shortName>
        <ecNumber evidence="1">1.1.1.261</ecNumber>
    </recommendedName>
    <alternativeName>
        <fullName evidence="1">Enantiomeric glycerophosphate synthase</fullName>
    </alternativeName>
    <alternativeName>
        <fullName evidence="1">sn-glycerol-1-phosphate dehydrogenase</fullName>
    </alternativeName>
</protein>
<reference key="1">
    <citation type="journal article" date="1999" name="Genetics">
        <title>Divergence of the hyperthermophilic archaea Pyrococcus furiosus and P. horikoshii inferred from complete genomic sequences.</title>
        <authorList>
            <person name="Maeder D.L."/>
            <person name="Weiss R.B."/>
            <person name="Dunn D.M."/>
            <person name="Cherry J.L."/>
            <person name="Gonzalez J.M."/>
            <person name="DiRuggiero J."/>
            <person name="Robb F.T."/>
        </authorList>
    </citation>
    <scope>NUCLEOTIDE SEQUENCE [LARGE SCALE GENOMIC DNA]</scope>
    <source>
        <strain>ATCC 43587 / DSM 3638 / JCM 8422 / Vc1</strain>
    </source>
</reference>
<name>G1PDH_PYRFU</name>
<comment type="function">
    <text evidence="1">Catalyzes the NAD(P)H-dependent reduction of dihydroxyacetonephosphate (DHAP or glycerone phosphate) to glycerol 1-phosphate (G1P). The G1P thus generated is used as the glycerophosphate backbone of phospholipids in the cellular membranes of Archaea.</text>
</comment>
<comment type="catalytic activity">
    <reaction evidence="1">
        <text>sn-glycerol 1-phosphate + NAD(+) = dihydroxyacetone phosphate + NADH + H(+)</text>
        <dbReference type="Rhea" id="RHEA:21412"/>
        <dbReference type="ChEBI" id="CHEBI:15378"/>
        <dbReference type="ChEBI" id="CHEBI:57540"/>
        <dbReference type="ChEBI" id="CHEBI:57642"/>
        <dbReference type="ChEBI" id="CHEBI:57685"/>
        <dbReference type="ChEBI" id="CHEBI:57945"/>
        <dbReference type="EC" id="1.1.1.261"/>
    </reaction>
</comment>
<comment type="catalytic activity">
    <reaction evidence="1">
        <text>sn-glycerol 1-phosphate + NADP(+) = dihydroxyacetone phosphate + NADPH + H(+)</text>
        <dbReference type="Rhea" id="RHEA:21416"/>
        <dbReference type="ChEBI" id="CHEBI:15378"/>
        <dbReference type="ChEBI" id="CHEBI:57642"/>
        <dbReference type="ChEBI" id="CHEBI:57685"/>
        <dbReference type="ChEBI" id="CHEBI:57783"/>
        <dbReference type="ChEBI" id="CHEBI:58349"/>
        <dbReference type="EC" id="1.1.1.261"/>
    </reaction>
</comment>
<comment type="cofactor">
    <cofactor evidence="1">
        <name>Zn(2+)</name>
        <dbReference type="ChEBI" id="CHEBI:29105"/>
    </cofactor>
    <text evidence="1">Binds 1 zinc ion per subunit.</text>
</comment>
<comment type="pathway">
    <text evidence="1">Membrane lipid metabolism; glycerophospholipid metabolism.</text>
</comment>
<comment type="subcellular location">
    <subcellularLocation>
        <location evidence="1">Cytoplasm</location>
    </subcellularLocation>
</comment>
<comment type="similarity">
    <text evidence="1">Belongs to the glycerol-1-phosphate dehydrogenase family.</text>
</comment>
<comment type="sequence caution" evidence="2">
    <conflict type="erroneous initiation">
        <sequence resource="EMBL-CDS" id="AAL81506"/>
    </conflict>
</comment>
<evidence type="ECO:0000255" key="1">
    <source>
        <dbReference type="HAMAP-Rule" id="MF_00497"/>
    </source>
</evidence>
<evidence type="ECO:0000305" key="2"/>
<gene>
    <name evidence="1" type="primary">egsA</name>
    <name type="ordered locus">PF1382</name>
</gene>